<protein>
    <recommendedName>
        <fullName evidence="1">Ribonuclease HII</fullName>
        <shortName evidence="1">RNase HII</shortName>
        <ecNumber evidence="1">3.1.26.4</ecNumber>
    </recommendedName>
</protein>
<proteinExistence type="inferred from homology"/>
<comment type="function">
    <text evidence="1">Endonuclease that specifically degrades the RNA of RNA-DNA hybrids.</text>
</comment>
<comment type="catalytic activity">
    <reaction evidence="1">
        <text>Endonucleolytic cleavage to 5'-phosphomonoester.</text>
        <dbReference type="EC" id="3.1.26.4"/>
    </reaction>
</comment>
<comment type="cofactor">
    <cofactor evidence="1">
        <name>Mn(2+)</name>
        <dbReference type="ChEBI" id="CHEBI:29035"/>
    </cofactor>
    <cofactor evidence="1">
        <name>Mg(2+)</name>
        <dbReference type="ChEBI" id="CHEBI:18420"/>
    </cofactor>
    <text evidence="1">Manganese or magnesium. Binds 1 divalent metal ion per monomer in the absence of substrate. May bind a second metal ion after substrate binding.</text>
</comment>
<comment type="subcellular location">
    <subcellularLocation>
        <location evidence="1">Cytoplasm</location>
    </subcellularLocation>
</comment>
<comment type="similarity">
    <text evidence="1">Belongs to the RNase HII family.</text>
</comment>
<sequence length="205" mass="22536">MLSTEFETPLWENLSRVCGIDEAGRGPLAGPVVAAAVAFPRHFKPTGILEKLDDSKKLTAELREELAPAIRESAEAWAVAVVDAEIIDRINILQATMLAMNQAVESLAATPELLLVDGNRFRPVLPIPYQTIVKGDSKVFSIAAASVLAKTRRDELMVAYAAEYPAYGFDLHFGYPTARHVEAIARHGRCAIHRKSFKLRKLGEK</sequence>
<accession>B3QQY0</accession>
<dbReference type="EC" id="3.1.26.4" evidence="1"/>
<dbReference type="EMBL" id="CP001099">
    <property type="protein sequence ID" value="ACF10445.1"/>
    <property type="molecule type" value="Genomic_DNA"/>
</dbReference>
<dbReference type="RefSeq" id="WP_012501280.1">
    <property type="nucleotide sequence ID" value="NC_011027.1"/>
</dbReference>
<dbReference type="SMR" id="B3QQY0"/>
<dbReference type="STRING" id="517417.Cpar_0016"/>
<dbReference type="KEGG" id="cpc:Cpar_0016"/>
<dbReference type="eggNOG" id="COG0164">
    <property type="taxonomic scope" value="Bacteria"/>
</dbReference>
<dbReference type="HOGENOM" id="CLU_036532_3_2_10"/>
<dbReference type="OrthoDB" id="9803420at2"/>
<dbReference type="Proteomes" id="UP000008811">
    <property type="component" value="Chromosome"/>
</dbReference>
<dbReference type="GO" id="GO:0005737">
    <property type="term" value="C:cytoplasm"/>
    <property type="evidence" value="ECO:0007669"/>
    <property type="project" value="UniProtKB-SubCell"/>
</dbReference>
<dbReference type="GO" id="GO:0032299">
    <property type="term" value="C:ribonuclease H2 complex"/>
    <property type="evidence" value="ECO:0007669"/>
    <property type="project" value="TreeGrafter"/>
</dbReference>
<dbReference type="GO" id="GO:0030145">
    <property type="term" value="F:manganese ion binding"/>
    <property type="evidence" value="ECO:0007669"/>
    <property type="project" value="UniProtKB-UniRule"/>
</dbReference>
<dbReference type="GO" id="GO:0003723">
    <property type="term" value="F:RNA binding"/>
    <property type="evidence" value="ECO:0007669"/>
    <property type="project" value="InterPro"/>
</dbReference>
<dbReference type="GO" id="GO:0004523">
    <property type="term" value="F:RNA-DNA hybrid ribonuclease activity"/>
    <property type="evidence" value="ECO:0007669"/>
    <property type="project" value="UniProtKB-UniRule"/>
</dbReference>
<dbReference type="GO" id="GO:0043137">
    <property type="term" value="P:DNA replication, removal of RNA primer"/>
    <property type="evidence" value="ECO:0007669"/>
    <property type="project" value="TreeGrafter"/>
</dbReference>
<dbReference type="GO" id="GO:0006298">
    <property type="term" value="P:mismatch repair"/>
    <property type="evidence" value="ECO:0007669"/>
    <property type="project" value="TreeGrafter"/>
</dbReference>
<dbReference type="CDD" id="cd07182">
    <property type="entry name" value="RNase_HII_bacteria_HII_like"/>
    <property type="match status" value="1"/>
</dbReference>
<dbReference type="Gene3D" id="3.30.420.10">
    <property type="entry name" value="Ribonuclease H-like superfamily/Ribonuclease H"/>
    <property type="match status" value="1"/>
</dbReference>
<dbReference type="HAMAP" id="MF_00052_B">
    <property type="entry name" value="RNase_HII_B"/>
    <property type="match status" value="1"/>
</dbReference>
<dbReference type="InterPro" id="IPR022898">
    <property type="entry name" value="RNase_HII"/>
</dbReference>
<dbReference type="InterPro" id="IPR001352">
    <property type="entry name" value="RNase_HII/HIII"/>
</dbReference>
<dbReference type="InterPro" id="IPR024567">
    <property type="entry name" value="RNase_HII/HIII_dom"/>
</dbReference>
<dbReference type="InterPro" id="IPR012337">
    <property type="entry name" value="RNaseH-like_sf"/>
</dbReference>
<dbReference type="InterPro" id="IPR036397">
    <property type="entry name" value="RNaseH_sf"/>
</dbReference>
<dbReference type="NCBIfam" id="NF000594">
    <property type="entry name" value="PRK00015.1-1"/>
    <property type="match status" value="1"/>
</dbReference>
<dbReference type="NCBIfam" id="NF000595">
    <property type="entry name" value="PRK00015.1-3"/>
    <property type="match status" value="1"/>
</dbReference>
<dbReference type="PANTHER" id="PTHR10954">
    <property type="entry name" value="RIBONUCLEASE H2 SUBUNIT A"/>
    <property type="match status" value="1"/>
</dbReference>
<dbReference type="PANTHER" id="PTHR10954:SF18">
    <property type="entry name" value="RIBONUCLEASE HII"/>
    <property type="match status" value="1"/>
</dbReference>
<dbReference type="Pfam" id="PF01351">
    <property type="entry name" value="RNase_HII"/>
    <property type="match status" value="1"/>
</dbReference>
<dbReference type="SUPFAM" id="SSF53098">
    <property type="entry name" value="Ribonuclease H-like"/>
    <property type="match status" value="1"/>
</dbReference>
<dbReference type="PROSITE" id="PS51975">
    <property type="entry name" value="RNASE_H_2"/>
    <property type="match status" value="1"/>
</dbReference>
<evidence type="ECO:0000255" key="1">
    <source>
        <dbReference type="HAMAP-Rule" id="MF_00052"/>
    </source>
</evidence>
<evidence type="ECO:0000255" key="2">
    <source>
        <dbReference type="PROSITE-ProRule" id="PRU01319"/>
    </source>
</evidence>
<keyword id="KW-0963">Cytoplasm</keyword>
<keyword id="KW-0255">Endonuclease</keyword>
<keyword id="KW-0378">Hydrolase</keyword>
<keyword id="KW-0464">Manganese</keyword>
<keyword id="KW-0479">Metal-binding</keyword>
<keyword id="KW-0540">Nuclease</keyword>
<name>RNH2_CHLP8</name>
<feature type="chain" id="PRO_1000091613" description="Ribonuclease HII">
    <location>
        <begin position="1"/>
        <end position="205"/>
    </location>
</feature>
<feature type="domain" description="RNase H type-2" evidence="2">
    <location>
        <begin position="15"/>
        <end position="205"/>
    </location>
</feature>
<feature type="binding site" evidence="1">
    <location>
        <position position="21"/>
    </location>
    <ligand>
        <name>a divalent metal cation</name>
        <dbReference type="ChEBI" id="CHEBI:60240"/>
    </ligand>
</feature>
<feature type="binding site" evidence="1">
    <location>
        <position position="22"/>
    </location>
    <ligand>
        <name>a divalent metal cation</name>
        <dbReference type="ChEBI" id="CHEBI:60240"/>
    </ligand>
</feature>
<feature type="binding site" evidence="1">
    <location>
        <position position="117"/>
    </location>
    <ligand>
        <name>a divalent metal cation</name>
        <dbReference type="ChEBI" id="CHEBI:60240"/>
    </ligand>
</feature>
<gene>
    <name evidence="1" type="primary">rnhB</name>
    <name type="ordered locus">Cpar_0016</name>
</gene>
<reference key="1">
    <citation type="submission" date="2008-06" db="EMBL/GenBank/DDBJ databases">
        <title>Complete sequence of Chlorobaculum parvum NCIB 8327.</title>
        <authorList>
            <consortium name="US DOE Joint Genome Institute"/>
            <person name="Lucas S."/>
            <person name="Copeland A."/>
            <person name="Lapidus A."/>
            <person name="Glavina del Rio T."/>
            <person name="Dalin E."/>
            <person name="Tice H."/>
            <person name="Bruce D."/>
            <person name="Goodwin L."/>
            <person name="Pitluck S."/>
            <person name="Schmutz J."/>
            <person name="Larimer F."/>
            <person name="Land M."/>
            <person name="Hauser L."/>
            <person name="Kyrpides N."/>
            <person name="Mikhailova N."/>
            <person name="Zhao F."/>
            <person name="Li T."/>
            <person name="Liu Z."/>
            <person name="Overmann J."/>
            <person name="Bryant D.A."/>
            <person name="Richardson P."/>
        </authorList>
    </citation>
    <scope>NUCLEOTIDE SEQUENCE [LARGE SCALE GENOMIC DNA]</scope>
    <source>
        <strain>DSM 263 / NCIMB 8327</strain>
    </source>
</reference>
<organism>
    <name type="scientific">Chlorobaculum parvum (strain DSM 263 / NCIMB 8327)</name>
    <name type="common">Chlorobium vibrioforme subsp. thiosulfatophilum</name>
    <dbReference type="NCBI Taxonomy" id="517417"/>
    <lineage>
        <taxon>Bacteria</taxon>
        <taxon>Pseudomonadati</taxon>
        <taxon>Chlorobiota</taxon>
        <taxon>Chlorobiia</taxon>
        <taxon>Chlorobiales</taxon>
        <taxon>Chlorobiaceae</taxon>
        <taxon>Chlorobaculum</taxon>
    </lineage>
</organism>